<comment type="function">
    <text evidence="1">Specifically methylates the N4 position of cytidine in position 1402 (C1402) of 16S rRNA.</text>
</comment>
<comment type="catalytic activity">
    <reaction evidence="1">
        <text>cytidine(1402) in 16S rRNA + S-adenosyl-L-methionine = N(4)-methylcytidine(1402) in 16S rRNA + S-adenosyl-L-homocysteine + H(+)</text>
        <dbReference type="Rhea" id="RHEA:42928"/>
        <dbReference type="Rhea" id="RHEA-COMP:10286"/>
        <dbReference type="Rhea" id="RHEA-COMP:10287"/>
        <dbReference type="ChEBI" id="CHEBI:15378"/>
        <dbReference type="ChEBI" id="CHEBI:57856"/>
        <dbReference type="ChEBI" id="CHEBI:59789"/>
        <dbReference type="ChEBI" id="CHEBI:74506"/>
        <dbReference type="ChEBI" id="CHEBI:82748"/>
        <dbReference type="EC" id="2.1.1.199"/>
    </reaction>
</comment>
<comment type="subcellular location">
    <subcellularLocation>
        <location evidence="1">Cytoplasm</location>
    </subcellularLocation>
</comment>
<comment type="similarity">
    <text evidence="1">Belongs to the methyltransferase superfamily. RsmH family.</text>
</comment>
<gene>
    <name evidence="1" type="primary">rsmH</name>
    <name type="synonym">mraW</name>
    <name type="ordered locus">DR_1866</name>
</gene>
<proteinExistence type="inferred from homology"/>
<name>RSMH_DEIRA</name>
<organism>
    <name type="scientific">Deinococcus radiodurans (strain ATCC 13939 / DSM 20539 / JCM 16871 / CCUG 27074 / LMG 4051 / NBRC 15346 / NCIMB 9279 / VKM B-1422 / R1)</name>
    <dbReference type="NCBI Taxonomy" id="243230"/>
    <lineage>
        <taxon>Bacteria</taxon>
        <taxon>Thermotogati</taxon>
        <taxon>Deinococcota</taxon>
        <taxon>Deinococci</taxon>
        <taxon>Deinococcales</taxon>
        <taxon>Deinococcaceae</taxon>
        <taxon>Deinococcus</taxon>
    </lineage>
</organism>
<sequence>MNIMTANQGAVSPSQTESEASPPTFSHVPVLATEIVEALAPAPGKVFVDGTLGGAGHTRLLLGRGATVYGIDQDPYALDRARQAALPGLHVLQGNYRDMAELLPAAGVTQVDGILLDIGVSSFQLDDAGRGFSYHTEAPLDMRMSQSGESAADVVNDLDETELAALIYEYGEERHSRRIARFIVQAREKAPIETTVQLAEIIKRAYPGFSKGIHPARRTFQALRIYVNDELGALRDGLSAAEGLLAPGGRLAVISFHSLEDRIVKRFLLGSDVLTPLTKRPIVAAESEQVDNPRARSAKLRVGERAAAPEGS</sequence>
<accession>Q9RT99</accession>
<feature type="chain" id="PRO_0000108617" description="Ribosomal RNA small subunit methyltransferase H">
    <location>
        <begin position="1"/>
        <end position="312"/>
    </location>
</feature>
<feature type="region of interest" description="Disordered" evidence="2">
    <location>
        <begin position="1"/>
        <end position="24"/>
    </location>
</feature>
<feature type="region of interest" description="Disordered" evidence="2">
    <location>
        <begin position="288"/>
        <end position="312"/>
    </location>
</feature>
<feature type="binding site" evidence="1">
    <location>
        <begin position="55"/>
        <end position="57"/>
    </location>
    <ligand>
        <name>S-adenosyl-L-methionine</name>
        <dbReference type="ChEBI" id="CHEBI:59789"/>
    </ligand>
</feature>
<feature type="binding site" evidence="1">
    <location>
        <position position="72"/>
    </location>
    <ligand>
        <name>S-adenosyl-L-methionine</name>
        <dbReference type="ChEBI" id="CHEBI:59789"/>
    </ligand>
</feature>
<feature type="binding site" evidence="1">
    <location>
        <position position="96"/>
    </location>
    <ligand>
        <name>S-adenosyl-L-methionine</name>
        <dbReference type="ChEBI" id="CHEBI:59789"/>
    </ligand>
</feature>
<feature type="binding site" evidence="1">
    <location>
        <position position="117"/>
    </location>
    <ligand>
        <name>S-adenosyl-L-methionine</name>
        <dbReference type="ChEBI" id="CHEBI:59789"/>
    </ligand>
</feature>
<feature type="binding site" evidence="1">
    <location>
        <position position="124"/>
    </location>
    <ligand>
        <name>S-adenosyl-L-methionine</name>
        <dbReference type="ChEBI" id="CHEBI:59789"/>
    </ligand>
</feature>
<dbReference type="EC" id="2.1.1.199" evidence="1"/>
<dbReference type="EMBL" id="AE000513">
    <property type="protein sequence ID" value="AAF11419.1"/>
    <property type="molecule type" value="Genomic_DNA"/>
</dbReference>
<dbReference type="PIR" id="D75344">
    <property type="entry name" value="D75344"/>
</dbReference>
<dbReference type="RefSeq" id="NP_295589.1">
    <property type="nucleotide sequence ID" value="NC_001263.1"/>
</dbReference>
<dbReference type="RefSeq" id="WP_010888501.1">
    <property type="nucleotide sequence ID" value="NC_001263.1"/>
</dbReference>
<dbReference type="SMR" id="Q9RT99"/>
<dbReference type="FunCoup" id="Q9RT99">
    <property type="interactions" value="399"/>
</dbReference>
<dbReference type="STRING" id="243230.DR_1866"/>
<dbReference type="PaxDb" id="243230-DR_1866"/>
<dbReference type="EnsemblBacteria" id="AAF11419">
    <property type="protein sequence ID" value="AAF11419"/>
    <property type="gene ID" value="DR_1866"/>
</dbReference>
<dbReference type="GeneID" id="69518105"/>
<dbReference type="KEGG" id="dra:DR_1866"/>
<dbReference type="PATRIC" id="fig|243230.17.peg.2078"/>
<dbReference type="eggNOG" id="COG0275">
    <property type="taxonomic scope" value="Bacteria"/>
</dbReference>
<dbReference type="HOGENOM" id="CLU_038422_1_1_0"/>
<dbReference type="InParanoid" id="Q9RT99"/>
<dbReference type="OrthoDB" id="9806637at2"/>
<dbReference type="Proteomes" id="UP000002524">
    <property type="component" value="Chromosome 1"/>
</dbReference>
<dbReference type="GO" id="GO:0005737">
    <property type="term" value="C:cytoplasm"/>
    <property type="evidence" value="ECO:0000318"/>
    <property type="project" value="GO_Central"/>
</dbReference>
<dbReference type="GO" id="GO:0071424">
    <property type="term" value="F:rRNA (cytosine-N4-)-methyltransferase activity"/>
    <property type="evidence" value="ECO:0000318"/>
    <property type="project" value="GO_Central"/>
</dbReference>
<dbReference type="GO" id="GO:0070475">
    <property type="term" value="P:rRNA base methylation"/>
    <property type="evidence" value="ECO:0000318"/>
    <property type="project" value="GO_Central"/>
</dbReference>
<dbReference type="CDD" id="cd02440">
    <property type="entry name" value="AdoMet_MTases"/>
    <property type="match status" value="1"/>
</dbReference>
<dbReference type="FunFam" id="1.10.150.170:FF:000003">
    <property type="entry name" value="Ribosomal RNA small subunit methyltransferase H"/>
    <property type="match status" value="1"/>
</dbReference>
<dbReference type="Gene3D" id="1.10.150.170">
    <property type="entry name" value="Putative methyltransferase TM0872, insert domain"/>
    <property type="match status" value="1"/>
</dbReference>
<dbReference type="Gene3D" id="3.40.50.150">
    <property type="entry name" value="Vaccinia Virus protein VP39"/>
    <property type="match status" value="1"/>
</dbReference>
<dbReference type="HAMAP" id="MF_01007">
    <property type="entry name" value="16SrRNA_methyltr_H"/>
    <property type="match status" value="1"/>
</dbReference>
<dbReference type="InterPro" id="IPR002903">
    <property type="entry name" value="RsmH"/>
</dbReference>
<dbReference type="InterPro" id="IPR023397">
    <property type="entry name" value="SAM-dep_MeTrfase_MraW_recog"/>
</dbReference>
<dbReference type="InterPro" id="IPR029063">
    <property type="entry name" value="SAM-dependent_MTases_sf"/>
</dbReference>
<dbReference type="NCBIfam" id="TIGR00006">
    <property type="entry name" value="16S rRNA (cytosine(1402)-N(4))-methyltransferase RsmH"/>
    <property type="match status" value="1"/>
</dbReference>
<dbReference type="PANTHER" id="PTHR11265:SF0">
    <property type="entry name" value="12S RRNA N4-METHYLCYTIDINE METHYLTRANSFERASE"/>
    <property type="match status" value="1"/>
</dbReference>
<dbReference type="PANTHER" id="PTHR11265">
    <property type="entry name" value="S-ADENOSYL-METHYLTRANSFERASE MRAW"/>
    <property type="match status" value="1"/>
</dbReference>
<dbReference type="Pfam" id="PF01795">
    <property type="entry name" value="Methyltransf_5"/>
    <property type="match status" value="1"/>
</dbReference>
<dbReference type="PIRSF" id="PIRSF004486">
    <property type="entry name" value="MraW"/>
    <property type="match status" value="1"/>
</dbReference>
<dbReference type="SUPFAM" id="SSF81799">
    <property type="entry name" value="Putative methyltransferase TM0872, insert domain"/>
    <property type="match status" value="1"/>
</dbReference>
<dbReference type="SUPFAM" id="SSF53335">
    <property type="entry name" value="S-adenosyl-L-methionine-dependent methyltransferases"/>
    <property type="match status" value="1"/>
</dbReference>
<reference key="1">
    <citation type="journal article" date="1999" name="Science">
        <title>Genome sequence of the radioresistant bacterium Deinococcus radiodurans R1.</title>
        <authorList>
            <person name="White O."/>
            <person name="Eisen J.A."/>
            <person name="Heidelberg J.F."/>
            <person name="Hickey E.K."/>
            <person name="Peterson J.D."/>
            <person name="Dodson R.J."/>
            <person name="Haft D.H."/>
            <person name="Gwinn M.L."/>
            <person name="Nelson W.C."/>
            <person name="Richardson D.L."/>
            <person name="Moffat K.S."/>
            <person name="Qin H."/>
            <person name="Jiang L."/>
            <person name="Pamphile W."/>
            <person name="Crosby M."/>
            <person name="Shen M."/>
            <person name="Vamathevan J.J."/>
            <person name="Lam P."/>
            <person name="McDonald L.A."/>
            <person name="Utterback T.R."/>
            <person name="Zalewski C."/>
            <person name="Makarova K.S."/>
            <person name="Aravind L."/>
            <person name="Daly M.J."/>
            <person name="Minton K.W."/>
            <person name="Fleischmann R.D."/>
            <person name="Ketchum K.A."/>
            <person name="Nelson K.E."/>
            <person name="Salzberg S.L."/>
            <person name="Smith H.O."/>
            <person name="Venter J.C."/>
            <person name="Fraser C.M."/>
        </authorList>
    </citation>
    <scope>NUCLEOTIDE SEQUENCE [LARGE SCALE GENOMIC DNA]</scope>
    <source>
        <strain>ATCC 13939 / DSM 20539 / JCM 16871 / CCUG 27074 / LMG 4051 / NBRC 15346 / NCIMB 9279 / VKM B-1422 / R1</strain>
    </source>
</reference>
<protein>
    <recommendedName>
        <fullName evidence="1">Ribosomal RNA small subunit methyltransferase H</fullName>
        <ecNumber evidence="1">2.1.1.199</ecNumber>
    </recommendedName>
    <alternativeName>
        <fullName evidence="1">16S rRNA m(4)C1402 methyltransferase</fullName>
    </alternativeName>
    <alternativeName>
        <fullName evidence="1">rRNA (cytosine-N(4)-)-methyltransferase RsmH</fullName>
    </alternativeName>
</protein>
<evidence type="ECO:0000255" key="1">
    <source>
        <dbReference type="HAMAP-Rule" id="MF_01007"/>
    </source>
</evidence>
<evidence type="ECO:0000256" key="2">
    <source>
        <dbReference type="SAM" id="MobiDB-lite"/>
    </source>
</evidence>
<keyword id="KW-0963">Cytoplasm</keyword>
<keyword id="KW-0489">Methyltransferase</keyword>
<keyword id="KW-1185">Reference proteome</keyword>
<keyword id="KW-0698">rRNA processing</keyword>
<keyword id="KW-0949">S-adenosyl-L-methionine</keyword>
<keyword id="KW-0808">Transferase</keyword>